<dbReference type="EMBL" id="BA000012">
    <property type="protein sequence ID" value="BAB51531.1"/>
    <property type="status" value="ALT_INIT"/>
    <property type="molecule type" value="Genomic_DNA"/>
</dbReference>
<dbReference type="RefSeq" id="WP_044548699.1">
    <property type="nucleotide sequence ID" value="NC_002678.2"/>
</dbReference>
<dbReference type="KEGG" id="mlo:mll5005"/>
<dbReference type="PATRIC" id="fig|266835.9.peg.3951"/>
<dbReference type="eggNOG" id="ENOG502ZZUX">
    <property type="taxonomic scope" value="Bacteria"/>
</dbReference>
<dbReference type="HOGENOM" id="CLU_1395337_0_0_5"/>
<dbReference type="Proteomes" id="UP000000552">
    <property type="component" value="Chromosome"/>
</dbReference>
<dbReference type="GO" id="GO:0005886">
    <property type="term" value="C:plasma membrane"/>
    <property type="evidence" value="ECO:0007669"/>
    <property type="project" value="UniProtKB-SubCell"/>
</dbReference>
<dbReference type="HAMAP" id="MF_01514">
    <property type="entry name" value="UPF0314"/>
    <property type="match status" value="1"/>
</dbReference>
<dbReference type="InterPro" id="IPR019691">
    <property type="entry name" value="DUF2585"/>
</dbReference>
<dbReference type="NCBIfam" id="NF002099">
    <property type="entry name" value="PRK00944.1"/>
    <property type="match status" value="1"/>
</dbReference>
<dbReference type="Pfam" id="PF10755">
    <property type="entry name" value="DUF2585"/>
    <property type="match status" value="1"/>
</dbReference>
<protein>
    <recommendedName>
        <fullName evidence="1">UPF0314 protein mll5005</fullName>
    </recommendedName>
</protein>
<evidence type="ECO:0000255" key="1">
    <source>
        <dbReference type="HAMAP-Rule" id="MF_01514"/>
    </source>
</evidence>
<evidence type="ECO:0000305" key="2"/>
<feature type="chain" id="PRO_0000217146" description="UPF0314 protein mll5005">
    <location>
        <begin position="1"/>
        <end position="199"/>
    </location>
</feature>
<feature type="transmembrane region" description="Helical" evidence="1">
    <location>
        <begin position="19"/>
        <end position="39"/>
    </location>
</feature>
<feature type="transmembrane region" description="Helical" evidence="1">
    <location>
        <begin position="68"/>
        <end position="88"/>
    </location>
</feature>
<feature type="transmembrane region" description="Helical" evidence="1">
    <location>
        <begin position="154"/>
        <end position="174"/>
    </location>
</feature>
<proteinExistence type="inferred from homology"/>
<reference key="1">
    <citation type="journal article" date="2000" name="DNA Res.">
        <title>Complete genome structure of the nitrogen-fixing symbiotic bacterium Mesorhizobium loti.</title>
        <authorList>
            <person name="Kaneko T."/>
            <person name="Nakamura Y."/>
            <person name="Sato S."/>
            <person name="Asamizu E."/>
            <person name="Kato T."/>
            <person name="Sasamoto S."/>
            <person name="Watanabe A."/>
            <person name="Idesawa K."/>
            <person name="Ishikawa A."/>
            <person name="Kawashima K."/>
            <person name="Kimura T."/>
            <person name="Kishida Y."/>
            <person name="Kiyokawa C."/>
            <person name="Kohara M."/>
            <person name="Matsumoto M."/>
            <person name="Matsuno A."/>
            <person name="Mochizuki Y."/>
            <person name="Nakayama S."/>
            <person name="Nakazaki N."/>
            <person name="Shimpo S."/>
            <person name="Sugimoto M."/>
            <person name="Takeuchi C."/>
            <person name="Yamada M."/>
            <person name="Tabata S."/>
        </authorList>
    </citation>
    <scope>NUCLEOTIDE SEQUENCE [LARGE SCALE GENOMIC DNA]</scope>
    <source>
        <strain>LMG 29417 / CECT 9101 / MAFF 303099</strain>
    </source>
</reference>
<gene>
    <name type="ordered locus">mll5005</name>
</gene>
<sequence length="199" mass="22372">MSKPAADDGYSAYEDSWRMGLLLVLGLLIFQAGALYGMGRTPICTCGYVKLWHGVVNSSENSQHIADWYTFSHIIHGFLFYALVRFLFPRSPIGLRLAFAVLIEGGWELLENSPFIIDRYRAGTISLDYYGDSIINSVSDTLAMVLGFVMARRLPIWVIVSLAILFELGTGYLIRDNLTLNVIMLLHPFEAIKQWQSGI</sequence>
<accession>Q98CU0</accession>
<keyword id="KW-1003">Cell membrane</keyword>
<keyword id="KW-0472">Membrane</keyword>
<keyword id="KW-0812">Transmembrane</keyword>
<keyword id="KW-1133">Transmembrane helix</keyword>
<name>Y5005_RHILO</name>
<comment type="subcellular location">
    <subcellularLocation>
        <location evidence="1">Cell membrane</location>
        <topology evidence="1">Multi-pass membrane protein</topology>
    </subcellularLocation>
</comment>
<comment type="similarity">
    <text evidence="1">Belongs to the UPF0314 family.</text>
</comment>
<comment type="sequence caution" evidence="2">
    <conflict type="erroneous initiation">
        <sequence resource="EMBL-CDS" id="BAB51531"/>
    </conflict>
</comment>
<organism>
    <name type="scientific">Mesorhizobium japonicum (strain LMG 29417 / CECT 9101 / MAFF 303099)</name>
    <name type="common">Mesorhizobium loti (strain MAFF 303099)</name>
    <dbReference type="NCBI Taxonomy" id="266835"/>
    <lineage>
        <taxon>Bacteria</taxon>
        <taxon>Pseudomonadati</taxon>
        <taxon>Pseudomonadota</taxon>
        <taxon>Alphaproteobacteria</taxon>
        <taxon>Hyphomicrobiales</taxon>
        <taxon>Phyllobacteriaceae</taxon>
        <taxon>Mesorhizobium</taxon>
    </lineage>
</organism>